<name>GLMU_JANSC</name>
<keyword id="KW-0012">Acyltransferase</keyword>
<keyword id="KW-0133">Cell shape</keyword>
<keyword id="KW-0961">Cell wall biogenesis/degradation</keyword>
<keyword id="KW-0963">Cytoplasm</keyword>
<keyword id="KW-0460">Magnesium</keyword>
<keyword id="KW-0479">Metal-binding</keyword>
<keyword id="KW-0511">Multifunctional enzyme</keyword>
<keyword id="KW-0548">Nucleotidyltransferase</keyword>
<keyword id="KW-0573">Peptidoglycan synthesis</keyword>
<keyword id="KW-1185">Reference proteome</keyword>
<keyword id="KW-0677">Repeat</keyword>
<keyword id="KW-0808">Transferase</keyword>
<organism>
    <name type="scientific">Jannaschia sp. (strain CCS1)</name>
    <dbReference type="NCBI Taxonomy" id="290400"/>
    <lineage>
        <taxon>Bacteria</taxon>
        <taxon>Pseudomonadati</taxon>
        <taxon>Pseudomonadota</taxon>
        <taxon>Alphaproteobacteria</taxon>
        <taxon>Rhodobacterales</taxon>
        <taxon>Roseobacteraceae</taxon>
        <taxon>Jannaschia</taxon>
    </lineage>
</organism>
<reference key="1">
    <citation type="submission" date="2006-02" db="EMBL/GenBank/DDBJ databases">
        <title>Complete sequence of chromosome of Jannaschia sp. CCS1.</title>
        <authorList>
            <consortium name="US DOE Joint Genome Institute"/>
            <person name="Copeland A."/>
            <person name="Lucas S."/>
            <person name="Lapidus A."/>
            <person name="Barry K."/>
            <person name="Detter J.C."/>
            <person name="Glavina del Rio T."/>
            <person name="Hammon N."/>
            <person name="Israni S."/>
            <person name="Pitluck S."/>
            <person name="Brettin T."/>
            <person name="Bruce D."/>
            <person name="Han C."/>
            <person name="Tapia R."/>
            <person name="Gilna P."/>
            <person name="Chertkov O."/>
            <person name="Saunders E."/>
            <person name="Schmutz J."/>
            <person name="Larimer F."/>
            <person name="Land M."/>
            <person name="Kyrpides N."/>
            <person name="Lykidis A."/>
            <person name="Moran M.A."/>
            <person name="Belas R."/>
            <person name="Ye W."/>
            <person name="Buchan A."/>
            <person name="Gonzalez J.M."/>
            <person name="Schell M.A."/>
            <person name="Richardson P."/>
        </authorList>
    </citation>
    <scope>NUCLEOTIDE SEQUENCE [LARGE SCALE GENOMIC DNA]</scope>
    <source>
        <strain>CCS1</strain>
    </source>
</reference>
<sequence length="454" mass="47156">MQATPRPLALIVLAAGAGTRMNSDLPKPLHTLGSAPLVAHTIAAGASLEPARLVVITGHGADEVEAVLQDIAPEAVTARQTPQLGTGHAVLQAAAALEGFEGDAMVLYGDSPFFTSETLQAMRIARAAHDVVMLGFRPADPGRYGRLVMDGDTLRKIVEFKDATPEEREITFCNSGVLCADAATLMTLLAQLTNDNAAGEYYLTDVPELAGNAGLTATAIACDEAETIGINSRAELVRAEAQFQSQRRAALIEAGVTMQAPDSVHFALDTHIGRDAVIEPYVVFGADVTVESGAQIRAFSHLEGCHISAGAIVGPYARLRPGAEIGNNAKVGNFVEVKAADIAEGAKVNHLSYIGDATVGERANIGAGTVTCNYDGVMKHRTDIGADAFIGSDTMLVAPVTVGAGAMTASGSTITEDVPDGALALGRAKQVNKPGLATKLRARLKAIKDAKSKD</sequence>
<gene>
    <name evidence="1" type="primary">glmU</name>
    <name type="ordered locus">Jann_3185</name>
</gene>
<feature type="chain" id="PRO_0000244296" description="Bifunctional protein GlmU">
    <location>
        <begin position="1"/>
        <end position="454"/>
    </location>
</feature>
<feature type="region of interest" description="Pyrophosphorylase" evidence="1">
    <location>
        <begin position="1"/>
        <end position="233"/>
    </location>
</feature>
<feature type="region of interest" description="Linker" evidence="1">
    <location>
        <begin position="234"/>
        <end position="254"/>
    </location>
</feature>
<feature type="region of interest" description="N-acetyltransferase" evidence="1">
    <location>
        <begin position="255"/>
        <end position="454"/>
    </location>
</feature>
<feature type="active site" description="Proton acceptor" evidence="1">
    <location>
        <position position="350"/>
    </location>
</feature>
<feature type="binding site" evidence="1">
    <location>
        <begin position="13"/>
        <end position="16"/>
    </location>
    <ligand>
        <name>UDP-N-acetyl-alpha-D-glucosamine</name>
        <dbReference type="ChEBI" id="CHEBI:57705"/>
    </ligand>
</feature>
<feature type="binding site" evidence="1">
    <location>
        <position position="27"/>
    </location>
    <ligand>
        <name>UDP-N-acetyl-alpha-D-glucosamine</name>
        <dbReference type="ChEBI" id="CHEBI:57705"/>
    </ligand>
</feature>
<feature type="binding site" evidence="1">
    <location>
        <position position="80"/>
    </location>
    <ligand>
        <name>UDP-N-acetyl-alpha-D-glucosamine</name>
        <dbReference type="ChEBI" id="CHEBI:57705"/>
    </ligand>
</feature>
<feature type="binding site" evidence="1">
    <location>
        <begin position="85"/>
        <end position="86"/>
    </location>
    <ligand>
        <name>UDP-N-acetyl-alpha-D-glucosamine</name>
        <dbReference type="ChEBI" id="CHEBI:57705"/>
    </ligand>
</feature>
<feature type="binding site" evidence="1">
    <location>
        <begin position="108"/>
        <end position="110"/>
    </location>
    <ligand>
        <name>UDP-N-acetyl-alpha-D-glucosamine</name>
        <dbReference type="ChEBI" id="CHEBI:57705"/>
    </ligand>
</feature>
<feature type="binding site" evidence="1">
    <location>
        <position position="110"/>
    </location>
    <ligand>
        <name>Mg(2+)</name>
        <dbReference type="ChEBI" id="CHEBI:18420"/>
    </ligand>
</feature>
<feature type="binding site" evidence="1">
    <location>
        <position position="145"/>
    </location>
    <ligand>
        <name>UDP-N-acetyl-alpha-D-glucosamine</name>
        <dbReference type="ChEBI" id="CHEBI:57705"/>
    </ligand>
</feature>
<feature type="binding site" evidence="1">
    <location>
        <position position="159"/>
    </location>
    <ligand>
        <name>UDP-N-acetyl-alpha-D-glucosamine</name>
        <dbReference type="ChEBI" id="CHEBI:57705"/>
    </ligand>
</feature>
<feature type="binding site" evidence="1">
    <location>
        <position position="174"/>
    </location>
    <ligand>
        <name>UDP-N-acetyl-alpha-D-glucosamine</name>
        <dbReference type="ChEBI" id="CHEBI:57705"/>
    </ligand>
</feature>
<feature type="binding site" evidence="1">
    <location>
        <position position="231"/>
    </location>
    <ligand>
        <name>Mg(2+)</name>
        <dbReference type="ChEBI" id="CHEBI:18420"/>
    </ligand>
</feature>
<feature type="binding site" evidence="1">
    <location>
        <position position="231"/>
    </location>
    <ligand>
        <name>UDP-N-acetyl-alpha-D-glucosamine</name>
        <dbReference type="ChEBI" id="CHEBI:57705"/>
    </ligand>
</feature>
<feature type="binding site" evidence="1">
    <location>
        <position position="320"/>
    </location>
    <ligand>
        <name>UDP-N-acetyl-alpha-D-glucosamine</name>
        <dbReference type="ChEBI" id="CHEBI:57705"/>
    </ligand>
</feature>
<feature type="binding site" evidence="1">
    <location>
        <position position="338"/>
    </location>
    <ligand>
        <name>UDP-N-acetyl-alpha-D-glucosamine</name>
        <dbReference type="ChEBI" id="CHEBI:57705"/>
    </ligand>
</feature>
<feature type="binding site" evidence="1">
    <location>
        <position position="353"/>
    </location>
    <ligand>
        <name>UDP-N-acetyl-alpha-D-glucosamine</name>
        <dbReference type="ChEBI" id="CHEBI:57705"/>
    </ligand>
</feature>
<feature type="binding site" evidence="1">
    <location>
        <position position="364"/>
    </location>
    <ligand>
        <name>UDP-N-acetyl-alpha-D-glucosamine</name>
        <dbReference type="ChEBI" id="CHEBI:57705"/>
    </ligand>
</feature>
<feature type="binding site" evidence="1">
    <location>
        <position position="367"/>
    </location>
    <ligand>
        <name>acetyl-CoA</name>
        <dbReference type="ChEBI" id="CHEBI:57288"/>
    </ligand>
</feature>
<feature type="binding site" evidence="1">
    <location>
        <begin position="373"/>
        <end position="374"/>
    </location>
    <ligand>
        <name>acetyl-CoA</name>
        <dbReference type="ChEBI" id="CHEBI:57288"/>
    </ligand>
</feature>
<feature type="binding site" evidence="1">
    <location>
        <position position="392"/>
    </location>
    <ligand>
        <name>acetyl-CoA</name>
        <dbReference type="ChEBI" id="CHEBI:57288"/>
    </ligand>
</feature>
<feature type="binding site" evidence="1">
    <location>
        <position position="410"/>
    </location>
    <ligand>
        <name>acetyl-CoA</name>
        <dbReference type="ChEBI" id="CHEBI:57288"/>
    </ligand>
</feature>
<feature type="binding site" evidence="1">
    <location>
        <position position="427"/>
    </location>
    <ligand>
        <name>acetyl-CoA</name>
        <dbReference type="ChEBI" id="CHEBI:57288"/>
    </ligand>
</feature>
<protein>
    <recommendedName>
        <fullName evidence="1">Bifunctional protein GlmU</fullName>
    </recommendedName>
    <domain>
        <recommendedName>
            <fullName evidence="1">UDP-N-acetylglucosamine pyrophosphorylase</fullName>
            <ecNumber evidence="1">2.7.7.23</ecNumber>
        </recommendedName>
        <alternativeName>
            <fullName evidence="1">N-acetylglucosamine-1-phosphate uridyltransferase</fullName>
        </alternativeName>
    </domain>
    <domain>
        <recommendedName>
            <fullName evidence="1">Glucosamine-1-phosphate N-acetyltransferase</fullName>
            <ecNumber evidence="1">2.3.1.157</ecNumber>
        </recommendedName>
    </domain>
</protein>
<evidence type="ECO:0000255" key="1">
    <source>
        <dbReference type="HAMAP-Rule" id="MF_01631"/>
    </source>
</evidence>
<dbReference type="EC" id="2.7.7.23" evidence="1"/>
<dbReference type="EC" id="2.3.1.157" evidence="1"/>
<dbReference type="EMBL" id="CP000264">
    <property type="protein sequence ID" value="ABD56102.1"/>
    <property type="molecule type" value="Genomic_DNA"/>
</dbReference>
<dbReference type="RefSeq" id="WP_011456306.1">
    <property type="nucleotide sequence ID" value="NC_007802.1"/>
</dbReference>
<dbReference type="SMR" id="Q28MG0"/>
<dbReference type="STRING" id="290400.Jann_3185"/>
<dbReference type="KEGG" id="jan:Jann_3185"/>
<dbReference type="eggNOG" id="COG1207">
    <property type="taxonomic scope" value="Bacteria"/>
</dbReference>
<dbReference type="HOGENOM" id="CLU_029499_15_2_5"/>
<dbReference type="OrthoDB" id="9775031at2"/>
<dbReference type="UniPathway" id="UPA00113">
    <property type="reaction ID" value="UER00532"/>
</dbReference>
<dbReference type="UniPathway" id="UPA00113">
    <property type="reaction ID" value="UER00533"/>
</dbReference>
<dbReference type="UniPathway" id="UPA00973"/>
<dbReference type="Proteomes" id="UP000008326">
    <property type="component" value="Chromosome"/>
</dbReference>
<dbReference type="GO" id="GO:0005737">
    <property type="term" value="C:cytoplasm"/>
    <property type="evidence" value="ECO:0007669"/>
    <property type="project" value="UniProtKB-SubCell"/>
</dbReference>
<dbReference type="GO" id="GO:0016020">
    <property type="term" value="C:membrane"/>
    <property type="evidence" value="ECO:0007669"/>
    <property type="project" value="GOC"/>
</dbReference>
<dbReference type="GO" id="GO:0019134">
    <property type="term" value="F:glucosamine-1-phosphate N-acetyltransferase activity"/>
    <property type="evidence" value="ECO:0007669"/>
    <property type="project" value="UniProtKB-UniRule"/>
</dbReference>
<dbReference type="GO" id="GO:0000287">
    <property type="term" value="F:magnesium ion binding"/>
    <property type="evidence" value="ECO:0007669"/>
    <property type="project" value="UniProtKB-UniRule"/>
</dbReference>
<dbReference type="GO" id="GO:0003977">
    <property type="term" value="F:UDP-N-acetylglucosamine diphosphorylase activity"/>
    <property type="evidence" value="ECO:0007669"/>
    <property type="project" value="UniProtKB-UniRule"/>
</dbReference>
<dbReference type="GO" id="GO:0000902">
    <property type="term" value="P:cell morphogenesis"/>
    <property type="evidence" value="ECO:0007669"/>
    <property type="project" value="UniProtKB-UniRule"/>
</dbReference>
<dbReference type="GO" id="GO:0071555">
    <property type="term" value="P:cell wall organization"/>
    <property type="evidence" value="ECO:0007669"/>
    <property type="project" value="UniProtKB-KW"/>
</dbReference>
<dbReference type="GO" id="GO:0009245">
    <property type="term" value="P:lipid A biosynthetic process"/>
    <property type="evidence" value="ECO:0007669"/>
    <property type="project" value="UniProtKB-UniRule"/>
</dbReference>
<dbReference type="GO" id="GO:0009252">
    <property type="term" value="P:peptidoglycan biosynthetic process"/>
    <property type="evidence" value="ECO:0007669"/>
    <property type="project" value="UniProtKB-UniRule"/>
</dbReference>
<dbReference type="GO" id="GO:0008360">
    <property type="term" value="P:regulation of cell shape"/>
    <property type="evidence" value="ECO:0007669"/>
    <property type="project" value="UniProtKB-KW"/>
</dbReference>
<dbReference type="GO" id="GO:0006048">
    <property type="term" value="P:UDP-N-acetylglucosamine biosynthetic process"/>
    <property type="evidence" value="ECO:0007669"/>
    <property type="project" value="UniProtKB-UniPathway"/>
</dbReference>
<dbReference type="CDD" id="cd02540">
    <property type="entry name" value="GT2_GlmU_N_bac"/>
    <property type="match status" value="1"/>
</dbReference>
<dbReference type="CDD" id="cd03353">
    <property type="entry name" value="LbH_GlmU_C"/>
    <property type="match status" value="1"/>
</dbReference>
<dbReference type="Gene3D" id="2.160.10.10">
    <property type="entry name" value="Hexapeptide repeat proteins"/>
    <property type="match status" value="1"/>
</dbReference>
<dbReference type="Gene3D" id="3.90.550.10">
    <property type="entry name" value="Spore Coat Polysaccharide Biosynthesis Protein SpsA, Chain A"/>
    <property type="match status" value="1"/>
</dbReference>
<dbReference type="HAMAP" id="MF_01631">
    <property type="entry name" value="GlmU"/>
    <property type="match status" value="1"/>
</dbReference>
<dbReference type="InterPro" id="IPR005882">
    <property type="entry name" value="Bifunctional_GlmU"/>
</dbReference>
<dbReference type="InterPro" id="IPR050065">
    <property type="entry name" value="GlmU-like"/>
</dbReference>
<dbReference type="InterPro" id="IPR038009">
    <property type="entry name" value="GlmU_C_LbH"/>
</dbReference>
<dbReference type="InterPro" id="IPR001451">
    <property type="entry name" value="Hexapep"/>
</dbReference>
<dbReference type="InterPro" id="IPR025877">
    <property type="entry name" value="MobA-like_NTP_Trfase"/>
</dbReference>
<dbReference type="InterPro" id="IPR029044">
    <property type="entry name" value="Nucleotide-diphossugar_trans"/>
</dbReference>
<dbReference type="InterPro" id="IPR011004">
    <property type="entry name" value="Trimer_LpxA-like_sf"/>
</dbReference>
<dbReference type="NCBIfam" id="TIGR01173">
    <property type="entry name" value="glmU"/>
    <property type="match status" value="1"/>
</dbReference>
<dbReference type="NCBIfam" id="NF010933">
    <property type="entry name" value="PRK14353.1"/>
    <property type="match status" value="1"/>
</dbReference>
<dbReference type="PANTHER" id="PTHR43584:SF3">
    <property type="entry name" value="BIFUNCTIONAL PROTEIN GLMU"/>
    <property type="match status" value="1"/>
</dbReference>
<dbReference type="PANTHER" id="PTHR43584">
    <property type="entry name" value="NUCLEOTIDYL TRANSFERASE"/>
    <property type="match status" value="1"/>
</dbReference>
<dbReference type="Pfam" id="PF00132">
    <property type="entry name" value="Hexapep"/>
    <property type="match status" value="2"/>
</dbReference>
<dbReference type="Pfam" id="PF12804">
    <property type="entry name" value="NTP_transf_3"/>
    <property type="match status" value="1"/>
</dbReference>
<dbReference type="SUPFAM" id="SSF53448">
    <property type="entry name" value="Nucleotide-diphospho-sugar transferases"/>
    <property type="match status" value="1"/>
</dbReference>
<dbReference type="SUPFAM" id="SSF51161">
    <property type="entry name" value="Trimeric LpxA-like enzymes"/>
    <property type="match status" value="1"/>
</dbReference>
<comment type="function">
    <text evidence="1">Catalyzes the last two sequential reactions in the de novo biosynthetic pathway for UDP-N-acetylglucosamine (UDP-GlcNAc). The C-terminal domain catalyzes the transfer of acetyl group from acetyl coenzyme A to glucosamine-1-phosphate (GlcN-1-P) to produce N-acetylglucosamine-1-phosphate (GlcNAc-1-P), which is converted into UDP-GlcNAc by the transfer of uridine 5-monophosphate (from uridine 5-triphosphate), a reaction catalyzed by the N-terminal domain.</text>
</comment>
<comment type="catalytic activity">
    <reaction evidence="1">
        <text>alpha-D-glucosamine 1-phosphate + acetyl-CoA = N-acetyl-alpha-D-glucosamine 1-phosphate + CoA + H(+)</text>
        <dbReference type="Rhea" id="RHEA:13725"/>
        <dbReference type="ChEBI" id="CHEBI:15378"/>
        <dbReference type="ChEBI" id="CHEBI:57287"/>
        <dbReference type="ChEBI" id="CHEBI:57288"/>
        <dbReference type="ChEBI" id="CHEBI:57776"/>
        <dbReference type="ChEBI" id="CHEBI:58516"/>
        <dbReference type="EC" id="2.3.1.157"/>
    </reaction>
</comment>
<comment type="catalytic activity">
    <reaction evidence="1">
        <text>N-acetyl-alpha-D-glucosamine 1-phosphate + UTP + H(+) = UDP-N-acetyl-alpha-D-glucosamine + diphosphate</text>
        <dbReference type="Rhea" id="RHEA:13509"/>
        <dbReference type="ChEBI" id="CHEBI:15378"/>
        <dbReference type="ChEBI" id="CHEBI:33019"/>
        <dbReference type="ChEBI" id="CHEBI:46398"/>
        <dbReference type="ChEBI" id="CHEBI:57705"/>
        <dbReference type="ChEBI" id="CHEBI:57776"/>
        <dbReference type="EC" id="2.7.7.23"/>
    </reaction>
</comment>
<comment type="cofactor">
    <cofactor evidence="1">
        <name>Mg(2+)</name>
        <dbReference type="ChEBI" id="CHEBI:18420"/>
    </cofactor>
    <text evidence="1">Binds 1 Mg(2+) ion per subunit.</text>
</comment>
<comment type="pathway">
    <text evidence="1">Nucleotide-sugar biosynthesis; UDP-N-acetyl-alpha-D-glucosamine biosynthesis; N-acetyl-alpha-D-glucosamine 1-phosphate from alpha-D-glucosamine 6-phosphate (route II): step 2/2.</text>
</comment>
<comment type="pathway">
    <text evidence="1">Nucleotide-sugar biosynthesis; UDP-N-acetyl-alpha-D-glucosamine biosynthesis; UDP-N-acetyl-alpha-D-glucosamine from N-acetyl-alpha-D-glucosamine 1-phosphate: step 1/1.</text>
</comment>
<comment type="pathway">
    <text evidence="1">Bacterial outer membrane biogenesis; LPS lipid A biosynthesis.</text>
</comment>
<comment type="subunit">
    <text evidence="1">Homotrimer.</text>
</comment>
<comment type="subcellular location">
    <subcellularLocation>
        <location evidence="1">Cytoplasm</location>
    </subcellularLocation>
</comment>
<comment type="similarity">
    <text evidence="1">In the N-terminal section; belongs to the N-acetylglucosamine-1-phosphate uridyltransferase family.</text>
</comment>
<comment type="similarity">
    <text evidence="1">In the C-terminal section; belongs to the transferase hexapeptide repeat family.</text>
</comment>
<proteinExistence type="inferred from homology"/>
<accession>Q28MG0</accession>